<reference key="1">
    <citation type="journal article" date="2009" name="Genome Res.">
        <title>Comparative genomics of protoploid Saccharomycetaceae.</title>
        <authorList>
            <consortium name="The Genolevures Consortium"/>
            <person name="Souciet J.-L."/>
            <person name="Dujon B."/>
            <person name="Gaillardin C."/>
            <person name="Johnston M."/>
            <person name="Baret P.V."/>
            <person name="Cliften P."/>
            <person name="Sherman D.J."/>
            <person name="Weissenbach J."/>
            <person name="Westhof E."/>
            <person name="Wincker P."/>
            <person name="Jubin C."/>
            <person name="Poulain J."/>
            <person name="Barbe V."/>
            <person name="Segurens B."/>
            <person name="Artiguenave F."/>
            <person name="Anthouard V."/>
            <person name="Vacherie B."/>
            <person name="Val M.-E."/>
            <person name="Fulton R.S."/>
            <person name="Minx P."/>
            <person name="Wilson R."/>
            <person name="Durrens P."/>
            <person name="Jean G."/>
            <person name="Marck C."/>
            <person name="Martin T."/>
            <person name="Nikolski M."/>
            <person name="Rolland T."/>
            <person name="Seret M.-L."/>
            <person name="Casaregola S."/>
            <person name="Despons L."/>
            <person name="Fairhead C."/>
            <person name="Fischer G."/>
            <person name="Lafontaine I."/>
            <person name="Leh V."/>
            <person name="Lemaire M."/>
            <person name="de Montigny J."/>
            <person name="Neuveglise C."/>
            <person name="Thierry A."/>
            <person name="Blanc-Lenfle I."/>
            <person name="Bleykasten C."/>
            <person name="Diffels J."/>
            <person name="Fritsch E."/>
            <person name="Frangeul L."/>
            <person name="Goeffon A."/>
            <person name="Jauniaux N."/>
            <person name="Kachouri-Lafond R."/>
            <person name="Payen C."/>
            <person name="Potier S."/>
            <person name="Pribylova L."/>
            <person name="Ozanne C."/>
            <person name="Richard G.-F."/>
            <person name="Sacerdot C."/>
            <person name="Straub M.-L."/>
            <person name="Talla E."/>
        </authorList>
    </citation>
    <scope>NUCLEOTIDE SEQUENCE [LARGE SCALE GENOMIC DNA]</scope>
    <source>
        <strain>ATCC 2623 / CBS 732 / BCRC 21506 / NBRC 1130 / NCYC 568 / NRRL Y-229</strain>
    </source>
</reference>
<protein>
    <recommendedName>
        <fullName>Altered inheritance of mitochondria protein 4</fullName>
    </recommendedName>
</protein>
<sequence>MTEKPNHEELGSKSIFYDPEWNPKGLAPPGFKNVAYNPATFTRKQSSLQRHMLGINADLPEEKKRMNKNGRE</sequence>
<feature type="chain" id="PRO_0000399861" description="Altered inheritance of mitochondria protein 4">
    <location>
        <begin position="1"/>
        <end position="72"/>
    </location>
</feature>
<proteinExistence type="inferred from homology"/>
<accession>C5DP04</accession>
<evidence type="ECO:0000250" key="1"/>
<evidence type="ECO:0000305" key="2"/>
<keyword id="KW-0963">Cytoplasm</keyword>
<keyword id="KW-1185">Reference proteome</keyword>
<gene>
    <name type="primary">AIM4</name>
    <name type="ordered locus">ZYRO0A13112g</name>
</gene>
<comment type="subcellular location">
    <subcellularLocation>
        <location evidence="1">Cytoplasm</location>
    </subcellularLocation>
</comment>
<comment type="similarity">
    <text evidence="2">Belongs to the AIM4 family.</text>
</comment>
<dbReference type="EMBL" id="CU928173">
    <property type="protein sequence ID" value="CAR25995.1"/>
    <property type="molecule type" value="Genomic_DNA"/>
</dbReference>
<dbReference type="RefSeq" id="XP_002494928.1">
    <property type="nucleotide sequence ID" value="XM_002494883.1"/>
</dbReference>
<dbReference type="GeneID" id="8201747"/>
<dbReference type="KEGG" id="zro:ZYRO0A13112g"/>
<dbReference type="HOGENOM" id="CLU_2724151_0_0_1"/>
<dbReference type="InParanoid" id="C5DP04"/>
<dbReference type="Proteomes" id="UP000008536">
    <property type="component" value="Chromosome A"/>
</dbReference>
<dbReference type="GO" id="GO:0005737">
    <property type="term" value="C:cytoplasm"/>
    <property type="evidence" value="ECO:0007669"/>
    <property type="project" value="UniProtKB-SubCell"/>
</dbReference>
<dbReference type="Pfam" id="PF12622">
    <property type="entry name" value="NpwBP"/>
    <property type="match status" value="1"/>
</dbReference>
<name>AIM4_ZYGRC</name>
<organism>
    <name type="scientific">Zygosaccharomyces rouxii (strain ATCC 2623 / CBS 732 / NBRC 1130 / NCYC 568 / NRRL Y-229)</name>
    <dbReference type="NCBI Taxonomy" id="559307"/>
    <lineage>
        <taxon>Eukaryota</taxon>
        <taxon>Fungi</taxon>
        <taxon>Dikarya</taxon>
        <taxon>Ascomycota</taxon>
        <taxon>Saccharomycotina</taxon>
        <taxon>Saccharomycetes</taxon>
        <taxon>Saccharomycetales</taxon>
        <taxon>Saccharomycetaceae</taxon>
        <taxon>Zygosaccharomyces</taxon>
    </lineage>
</organism>